<protein>
    <recommendedName>
        <fullName evidence="1">Large ribosomal subunit protein uL23</fullName>
    </recommendedName>
    <alternativeName>
        <fullName evidence="2">50S ribosomal protein L23</fullName>
    </alternativeName>
</protein>
<comment type="function">
    <text evidence="1">One of the early assembly proteins it binds 23S rRNA. One of the proteins that surrounds the polypeptide exit tunnel on the outside of the ribosome. Forms the main docking site for trigger factor binding to the ribosome.</text>
</comment>
<comment type="subunit">
    <text evidence="1">Part of the 50S ribosomal subunit. Contacts protein L29, and trigger factor when it is bound to the ribosome.</text>
</comment>
<comment type="similarity">
    <text evidence="1">Belongs to the universal ribosomal protein uL23 family.</text>
</comment>
<comment type="sequence caution" evidence="2">
    <conflict type="erroneous initiation">
        <sequence resource="EMBL-CDS" id="AAU26428"/>
    </conflict>
</comment>
<evidence type="ECO:0000255" key="1">
    <source>
        <dbReference type="HAMAP-Rule" id="MF_01369"/>
    </source>
</evidence>
<evidence type="ECO:0000305" key="2"/>
<reference key="1">
    <citation type="journal article" date="2004" name="Science">
        <title>The genomic sequence of the accidental pathogen Legionella pneumophila.</title>
        <authorList>
            <person name="Chien M."/>
            <person name="Morozova I."/>
            <person name="Shi S."/>
            <person name="Sheng H."/>
            <person name="Chen J."/>
            <person name="Gomez S.M."/>
            <person name="Asamani G."/>
            <person name="Hill K."/>
            <person name="Nuara J."/>
            <person name="Feder M."/>
            <person name="Rineer J."/>
            <person name="Greenberg J.J."/>
            <person name="Steshenko V."/>
            <person name="Park S.H."/>
            <person name="Zhao B."/>
            <person name="Teplitskaya E."/>
            <person name="Edwards J.R."/>
            <person name="Pampou S."/>
            <person name="Georghiou A."/>
            <person name="Chou I.-C."/>
            <person name="Iannuccilli W."/>
            <person name="Ulz M.E."/>
            <person name="Kim D.H."/>
            <person name="Geringer-Sameth A."/>
            <person name="Goldsberry C."/>
            <person name="Morozov P."/>
            <person name="Fischer S.G."/>
            <person name="Segal G."/>
            <person name="Qu X."/>
            <person name="Rzhetsky A."/>
            <person name="Zhang P."/>
            <person name="Cayanis E."/>
            <person name="De Jong P.J."/>
            <person name="Ju J."/>
            <person name="Kalachikov S."/>
            <person name="Shuman H.A."/>
            <person name="Russo J.J."/>
        </authorList>
    </citation>
    <scope>NUCLEOTIDE SEQUENCE [LARGE SCALE GENOMIC DNA]</scope>
    <source>
        <strain>Philadelphia 1 / ATCC 33152 / DSM 7513</strain>
    </source>
</reference>
<accession>Q5ZYP1</accession>
<gene>
    <name evidence="1" type="primary">rplW</name>
    <name type="ordered locus">lpg0331</name>
</gene>
<name>RL23_LEGPH</name>
<sequence>MNAERLMMVLREPHTSEKATVMADKFKQFTFKVLKNATKTEIKLAVEHIFNVKVKSVSVVNVKGKSKRFKQTSGKRSDWKKAFVSLHADQDIDFTVTE</sequence>
<keyword id="KW-1185">Reference proteome</keyword>
<keyword id="KW-0687">Ribonucleoprotein</keyword>
<keyword id="KW-0689">Ribosomal protein</keyword>
<keyword id="KW-0694">RNA-binding</keyword>
<keyword id="KW-0699">rRNA-binding</keyword>
<dbReference type="EMBL" id="AE017354">
    <property type="protein sequence ID" value="AAU26428.1"/>
    <property type="status" value="ALT_INIT"/>
    <property type="molecule type" value="Genomic_DNA"/>
</dbReference>
<dbReference type="RefSeq" id="WP_011213009.1">
    <property type="nucleotide sequence ID" value="NC_002942.5"/>
</dbReference>
<dbReference type="RefSeq" id="YP_094375.1">
    <property type="nucleotide sequence ID" value="NC_002942.5"/>
</dbReference>
<dbReference type="SMR" id="Q5ZYP1"/>
<dbReference type="STRING" id="272624.lpg0331"/>
<dbReference type="PaxDb" id="272624-lpg0331"/>
<dbReference type="GeneID" id="57034334"/>
<dbReference type="KEGG" id="lpn:lpg0331"/>
<dbReference type="PATRIC" id="fig|272624.6.peg.338"/>
<dbReference type="eggNOG" id="COG0089">
    <property type="taxonomic scope" value="Bacteria"/>
</dbReference>
<dbReference type="HOGENOM" id="CLU_037562_3_1_6"/>
<dbReference type="OrthoDB" id="9793353at2"/>
<dbReference type="Proteomes" id="UP000000609">
    <property type="component" value="Chromosome"/>
</dbReference>
<dbReference type="GO" id="GO:1990904">
    <property type="term" value="C:ribonucleoprotein complex"/>
    <property type="evidence" value="ECO:0007669"/>
    <property type="project" value="UniProtKB-KW"/>
</dbReference>
<dbReference type="GO" id="GO:0005840">
    <property type="term" value="C:ribosome"/>
    <property type="evidence" value="ECO:0007669"/>
    <property type="project" value="UniProtKB-KW"/>
</dbReference>
<dbReference type="GO" id="GO:0019843">
    <property type="term" value="F:rRNA binding"/>
    <property type="evidence" value="ECO:0007669"/>
    <property type="project" value="UniProtKB-UniRule"/>
</dbReference>
<dbReference type="GO" id="GO:0003735">
    <property type="term" value="F:structural constituent of ribosome"/>
    <property type="evidence" value="ECO:0007669"/>
    <property type="project" value="InterPro"/>
</dbReference>
<dbReference type="GO" id="GO:0006412">
    <property type="term" value="P:translation"/>
    <property type="evidence" value="ECO:0007669"/>
    <property type="project" value="UniProtKB-UniRule"/>
</dbReference>
<dbReference type="FunFam" id="3.30.70.330:FF:000001">
    <property type="entry name" value="50S ribosomal protein L23"/>
    <property type="match status" value="1"/>
</dbReference>
<dbReference type="Gene3D" id="3.30.70.330">
    <property type="match status" value="1"/>
</dbReference>
<dbReference type="HAMAP" id="MF_01369_B">
    <property type="entry name" value="Ribosomal_uL23_B"/>
    <property type="match status" value="1"/>
</dbReference>
<dbReference type="InterPro" id="IPR012677">
    <property type="entry name" value="Nucleotide-bd_a/b_plait_sf"/>
</dbReference>
<dbReference type="InterPro" id="IPR013025">
    <property type="entry name" value="Ribosomal_uL23-like"/>
</dbReference>
<dbReference type="InterPro" id="IPR012678">
    <property type="entry name" value="Ribosomal_uL23/eL15/eS24_sf"/>
</dbReference>
<dbReference type="NCBIfam" id="NF004359">
    <property type="entry name" value="PRK05738.1-3"/>
    <property type="match status" value="1"/>
</dbReference>
<dbReference type="NCBIfam" id="NF004363">
    <property type="entry name" value="PRK05738.2-4"/>
    <property type="match status" value="1"/>
</dbReference>
<dbReference type="PANTHER" id="PTHR11620">
    <property type="entry name" value="60S RIBOSOMAL PROTEIN L23A"/>
    <property type="match status" value="1"/>
</dbReference>
<dbReference type="Pfam" id="PF00276">
    <property type="entry name" value="Ribosomal_L23"/>
    <property type="match status" value="1"/>
</dbReference>
<dbReference type="SUPFAM" id="SSF54189">
    <property type="entry name" value="Ribosomal proteins S24e, L23 and L15e"/>
    <property type="match status" value="1"/>
</dbReference>
<organism>
    <name type="scientific">Legionella pneumophila subsp. pneumophila (strain Philadelphia 1 / ATCC 33152 / DSM 7513)</name>
    <dbReference type="NCBI Taxonomy" id="272624"/>
    <lineage>
        <taxon>Bacteria</taxon>
        <taxon>Pseudomonadati</taxon>
        <taxon>Pseudomonadota</taxon>
        <taxon>Gammaproteobacteria</taxon>
        <taxon>Legionellales</taxon>
        <taxon>Legionellaceae</taxon>
        <taxon>Legionella</taxon>
    </lineage>
</organism>
<feature type="chain" id="PRO_0000272766" description="Large ribosomal subunit protein uL23">
    <location>
        <begin position="1"/>
        <end position="98"/>
    </location>
</feature>
<proteinExistence type="inferred from homology"/>